<gene>
    <name type="primary">MT-ND1</name>
    <name type="synonym">MTND1</name>
    <name type="synonym">NADH1</name>
    <name type="synonym">ND1</name>
</gene>
<proteinExistence type="inferred from homology"/>
<dbReference type="EC" id="7.1.1.2" evidence="1"/>
<dbReference type="EMBL" id="AF492350">
    <property type="protein sequence ID" value="AAQ06580.1"/>
    <property type="molecule type" value="Genomic_DNA"/>
</dbReference>
<dbReference type="EMBL" id="AY126697">
    <property type="protein sequence ID" value="AAM95730.1"/>
    <property type="molecule type" value="Genomic_DNA"/>
</dbReference>
<dbReference type="RefSeq" id="YP_052697.1">
    <property type="nucleotide sequence ID" value="NC_005971.1"/>
</dbReference>
<dbReference type="SMR" id="Q6EMT1"/>
<dbReference type="GeneID" id="2885975"/>
<dbReference type="KEGG" id="biu:2885975"/>
<dbReference type="CTD" id="4535"/>
<dbReference type="OrthoDB" id="12705at91561"/>
<dbReference type="Proteomes" id="UP000515132">
    <property type="component" value="Mitochondrion MT"/>
</dbReference>
<dbReference type="GO" id="GO:0005743">
    <property type="term" value="C:mitochondrial inner membrane"/>
    <property type="evidence" value="ECO:0000250"/>
    <property type="project" value="UniProtKB"/>
</dbReference>
<dbReference type="GO" id="GO:0008137">
    <property type="term" value="F:NADH dehydrogenase (ubiquinone) activity"/>
    <property type="evidence" value="ECO:0000250"/>
    <property type="project" value="UniProtKB"/>
</dbReference>
<dbReference type="GO" id="GO:0006120">
    <property type="term" value="P:mitochondrial electron transport, NADH to ubiquinone"/>
    <property type="evidence" value="ECO:0000250"/>
    <property type="project" value="UniProtKB"/>
</dbReference>
<dbReference type="GO" id="GO:0032981">
    <property type="term" value="P:mitochondrial respiratory chain complex I assembly"/>
    <property type="evidence" value="ECO:0000250"/>
    <property type="project" value="UniProtKB"/>
</dbReference>
<dbReference type="HAMAP" id="MF_01350">
    <property type="entry name" value="NDH1_NuoH"/>
    <property type="match status" value="1"/>
</dbReference>
<dbReference type="InterPro" id="IPR001694">
    <property type="entry name" value="NADH_UbQ_OxRdtase_su1/FPO"/>
</dbReference>
<dbReference type="InterPro" id="IPR018086">
    <property type="entry name" value="NADH_UbQ_OxRdtase_su1_CS"/>
</dbReference>
<dbReference type="PANTHER" id="PTHR11432">
    <property type="entry name" value="NADH DEHYDROGENASE SUBUNIT 1"/>
    <property type="match status" value="1"/>
</dbReference>
<dbReference type="PANTHER" id="PTHR11432:SF3">
    <property type="entry name" value="NADH-UBIQUINONE OXIDOREDUCTASE CHAIN 1"/>
    <property type="match status" value="1"/>
</dbReference>
<dbReference type="Pfam" id="PF00146">
    <property type="entry name" value="NADHdh"/>
    <property type="match status" value="1"/>
</dbReference>
<dbReference type="PROSITE" id="PS00667">
    <property type="entry name" value="COMPLEX1_ND1_1"/>
    <property type="match status" value="1"/>
</dbReference>
<dbReference type="PROSITE" id="PS00668">
    <property type="entry name" value="COMPLEX1_ND1_2"/>
    <property type="match status" value="1"/>
</dbReference>
<accession>Q6EMT1</accession>
<comment type="function">
    <text evidence="1">Core subunit of the mitochondrial membrane respiratory chain NADH dehydrogenase (Complex I) which catalyzes electron transfer from NADH through the respiratory chain, using ubiquinone as an electron acceptor (By similarity). Essential for the catalytic activity and assembly of complex I (By similarity).</text>
</comment>
<comment type="catalytic activity">
    <reaction evidence="1">
        <text>a ubiquinone + NADH + 5 H(+)(in) = a ubiquinol + NAD(+) + 4 H(+)(out)</text>
        <dbReference type="Rhea" id="RHEA:29091"/>
        <dbReference type="Rhea" id="RHEA-COMP:9565"/>
        <dbReference type="Rhea" id="RHEA-COMP:9566"/>
        <dbReference type="ChEBI" id="CHEBI:15378"/>
        <dbReference type="ChEBI" id="CHEBI:16389"/>
        <dbReference type="ChEBI" id="CHEBI:17976"/>
        <dbReference type="ChEBI" id="CHEBI:57540"/>
        <dbReference type="ChEBI" id="CHEBI:57945"/>
        <dbReference type="EC" id="7.1.1.2"/>
    </reaction>
</comment>
<comment type="subunit">
    <text evidence="2">Core subunit of respiratory chain NADH dehydrogenase (Complex I) which is composed of 45 different subunits.</text>
</comment>
<comment type="subcellular location">
    <subcellularLocation>
        <location evidence="2">Mitochondrion inner membrane</location>
        <topology evidence="3">Multi-pass membrane protein</topology>
    </subcellularLocation>
</comment>
<comment type="similarity">
    <text evidence="4">Belongs to the complex I subunit 1 family.</text>
</comment>
<reference key="1">
    <citation type="submission" date="2002-03" db="EMBL/GenBank/DDBJ databases">
        <title>Complete sequence of the Bos indicus mitochondrial genome.</title>
        <authorList>
            <person name="Hiendleder S."/>
            <person name="Lewalski H."/>
            <person name="Wolf E."/>
        </authorList>
    </citation>
    <scope>NUCLEOTIDE SEQUENCE [GENOMIC DNA]</scope>
    <source>
        <tissue>Liver</tissue>
    </source>
</reference>
<reference key="2">
    <citation type="submission" date="2002-06" db="EMBL/GenBank/DDBJ databases">
        <title>The complete mitochondrial genome nucleotide sequence of Bos indicus.</title>
        <authorList>
            <person name="Miretti M.M."/>
            <person name="Pereira H.A. Jr."/>
            <person name="Greggio C."/>
            <person name="Suzuki J. Jr."/>
            <person name="Ferro J.A."/>
            <person name="Ferro M.I."/>
            <person name="Meirelles F."/>
            <person name="Garcia J.M."/>
            <person name="Smith L.C."/>
        </authorList>
    </citation>
    <scope>NUCLEOTIDE SEQUENCE [GENOMIC DNA]</scope>
</reference>
<name>NU1M_BOSIN</name>
<organism>
    <name type="scientific">Bos indicus</name>
    <name type="common">Zebu</name>
    <dbReference type="NCBI Taxonomy" id="9915"/>
    <lineage>
        <taxon>Eukaryota</taxon>
        <taxon>Metazoa</taxon>
        <taxon>Chordata</taxon>
        <taxon>Craniata</taxon>
        <taxon>Vertebrata</taxon>
        <taxon>Euteleostomi</taxon>
        <taxon>Mammalia</taxon>
        <taxon>Eutheria</taxon>
        <taxon>Laurasiatheria</taxon>
        <taxon>Artiodactyla</taxon>
        <taxon>Ruminantia</taxon>
        <taxon>Pecora</taxon>
        <taxon>Bovidae</taxon>
        <taxon>Bovinae</taxon>
        <taxon>Bos</taxon>
    </lineage>
</organism>
<evidence type="ECO:0000250" key="1">
    <source>
        <dbReference type="UniProtKB" id="P03886"/>
    </source>
</evidence>
<evidence type="ECO:0000250" key="2">
    <source>
        <dbReference type="UniProtKB" id="P03887"/>
    </source>
</evidence>
<evidence type="ECO:0000255" key="3"/>
<evidence type="ECO:0000305" key="4"/>
<keyword id="KW-0249">Electron transport</keyword>
<keyword id="KW-0472">Membrane</keyword>
<keyword id="KW-0496">Mitochondrion</keyword>
<keyword id="KW-0999">Mitochondrion inner membrane</keyword>
<keyword id="KW-0520">NAD</keyword>
<keyword id="KW-1185">Reference proteome</keyword>
<keyword id="KW-0679">Respiratory chain</keyword>
<keyword id="KW-1278">Translocase</keyword>
<keyword id="KW-0812">Transmembrane</keyword>
<keyword id="KW-1133">Transmembrane helix</keyword>
<keyword id="KW-0813">Transport</keyword>
<keyword id="KW-0830">Ubiquinone</keyword>
<protein>
    <recommendedName>
        <fullName>NADH-ubiquinone oxidoreductase chain 1</fullName>
        <ecNumber evidence="1">7.1.1.2</ecNumber>
    </recommendedName>
    <alternativeName>
        <fullName>NADH dehydrogenase subunit 1</fullName>
    </alternativeName>
</protein>
<geneLocation type="mitochondrion"/>
<feature type="chain" id="PRO_0000253514" description="NADH-ubiquinone oxidoreductase chain 1">
    <location>
        <begin position="1"/>
        <end position="318"/>
    </location>
</feature>
<feature type="transmembrane region" description="Helical" evidence="3">
    <location>
        <begin position="2"/>
        <end position="22"/>
    </location>
</feature>
<feature type="transmembrane region" description="Helical" evidence="3">
    <location>
        <begin position="70"/>
        <end position="90"/>
    </location>
</feature>
<feature type="transmembrane region" description="Helical" evidence="3">
    <location>
        <begin position="100"/>
        <end position="120"/>
    </location>
</feature>
<feature type="transmembrane region" description="Helical" evidence="3">
    <location>
        <begin position="147"/>
        <end position="167"/>
    </location>
</feature>
<feature type="transmembrane region" description="Helical" evidence="3">
    <location>
        <begin position="172"/>
        <end position="192"/>
    </location>
</feature>
<feature type="transmembrane region" description="Helical" evidence="3">
    <location>
        <begin position="222"/>
        <end position="242"/>
    </location>
</feature>
<feature type="transmembrane region" description="Helical" evidence="3">
    <location>
        <begin position="253"/>
        <end position="273"/>
    </location>
</feature>
<feature type="transmembrane region" description="Helical" evidence="3">
    <location>
        <begin position="294"/>
        <end position="314"/>
    </location>
</feature>
<sequence>MFMINILMLIIPILLAVAFLTLVERKVLGYMQLRKGPNVVGPYGLLQPIADAIKLFIKEPLRPATSSASMFILAPIMALGLALTMWIPLPMPYPLINMNLGVLFMLAMSSLAVYSILWSGWASNSKYALIGALRAVAQTISYEVTLAIILLSVLLMSGSFTLSTLIITQEQMWLILPAWPLAMMWFISTLAETNRAPFDLTEGESELVSGFNVEYAAGPFALFFMAEYANIIMMNIFTAILFLGTSHNPHMPELYTINFTIKSLLLTMSFLWIRASYPRFRYDQLMHLLWKNFLPLTLALCMWHVSLPILTSGIPPQT</sequence>